<reference key="1">
    <citation type="journal article" date="2005" name="Mol. Cell. Biochem.">
        <title>Molecular cloning and characterization of a novel muscle adenylosuccinate synthetase, AdSSL1, from human bone marrow stromal cells.</title>
        <authorList>
            <person name="Sun H."/>
            <person name="Li N."/>
            <person name="Wang X."/>
            <person name="Chen T."/>
            <person name="Shi L."/>
            <person name="Zhang L."/>
            <person name="Wang J."/>
            <person name="Wan T."/>
            <person name="Cao X."/>
        </authorList>
    </citation>
    <scope>NUCLEOTIDE SEQUENCE [MRNA] (ISOFORM 1)</scope>
    <scope>SUBCELLULAR LOCATION</scope>
    <scope>TISSUE SPECIFICITY</scope>
    <source>
        <tissue>Bone marrow stroma</tissue>
    </source>
</reference>
<reference key="2">
    <citation type="journal article" date="2004" name="Nat. Genet.">
        <title>Complete sequencing and characterization of 21,243 full-length human cDNAs.</title>
        <authorList>
            <person name="Ota T."/>
            <person name="Suzuki Y."/>
            <person name="Nishikawa T."/>
            <person name="Otsuki T."/>
            <person name="Sugiyama T."/>
            <person name="Irie R."/>
            <person name="Wakamatsu A."/>
            <person name="Hayashi K."/>
            <person name="Sato H."/>
            <person name="Nagai K."/>
            <person name="Kimura K."/>
            <person name="Makita H."/>
            <person name="Sekine M."/>
            <person name="Obayashi M."/>
            <person name="Nishi T."/>
            <person name="Shibahara T."/>
            <person name="Tanaka T."/>
            <person name="Ishii S."/>
            <person name="Yamamoto J."/>
            <person name="Saito K."/>
            <person name="Kawai Y."/>
            <person name="Isono Y."/>
            <person name="Nakamura Y."/>
            <person name="Nagahari K."/>
            <person name="Murakami K."/>
            <person name="Yasuda T."/>
            <person name="Iwayanagi T."/>
            <person name="Wagatsuma M."/>
            <person name="Shiratori A."/>
            <person name="Sudo H."/>
            <person name="Hosoiri T."/>
            <person name="Kaku Y."/>
            <person name="Kodaira H."/>
            <person name="Kondo H."/>
            <person name="Sugawara M."/>
            <person name="Takahashi M."/>
            <person name="Kanda K."/>
            <person name="Yokoi T."/>
            <person name="Furuya T."/>
            <person name="Kikkawa E."/>
            <person name="Omura Y."/>
            <person name="Abe K."/>
            <person name="Kamihara K."/>
            <person name="Katsuta N."/>
            <person name="Sato K."/>
            <person name="Tanikawa M."/>
            <person name="Yamazaki M."/>
            <person name="Ninomiya K."/>
            <person name="Ishibashi T."/>
            <person name="Yamashita H."/>
            <person name="Murakawa K."/>
            <person name="Fujimori K."/>
            <person name="Tanai H."/>
            <person name="Kimata M."/>
            <person name="Watanabe M."/>
            <person name="Hiraoka S."/>
            <person name="Chiba Y."/>
            <person name="Ishida S."/>
            <person name="Ono Y."/>
            <person name="Takiguchi S."/>
            <person name="Watanabe S."/>
            <person name="Yosida M."/>
            <person name="Hotuta T."/>
            <person name="Kusano J."/>
            <person name="Kanehori K."/>
            <person name="Takahashi-Fujii A."/>
            <person name="Hara H."/>
            <person name="Tanase T.-O."/>
            <person name="Nomura Y."/>
            <person name="Togiya S."/>
            <person name="Komai F."/>
            <person name="Hara R."/>
            <person name="Takeuchi K."/>
            <person name="Arita M."/>
            <person name="Imose N."/>
            <person name="Musashino K."/>
            <person name="Yuuki H."/>
            <person name="Oshima A."/>
            <person name="Sasaki N."/>
            <person name="Aotsuka S."/>
            <person name="Yoshikawa Y."/>
            <person name="Matsunawa H."/>
            <person name="Ichihara T."/>
            <person name="Shiohata N."/>
            <person name="Sano S."/>
            <person name="Moriya S."/>
            <person name="Momiyama H."/>
            <person name="Satoh N."/>
            <person name="Takami S."/>
            <person name="Terashima Y."/>
            <person name="Suzuki O."/>
            <person name="Nakagawa S."/>
            <person name="Senoh A."/>
            <person name="Mizoguchi H."/>
            <person name="Goto Y."/>
            <person name="Shimizu F."/>
            <person name="Wakebe H."/>
            <person name="Hishigaki H."/>
            <person name="Watanabe T."/>
            <person name="Sugiyama A."/>
            <person name="Takemoto M."/>
            <person name="Kawakami B."/>
            <person name="Yamazaki M."/>
            <person name="Watanabe K."/>
            <person name="Kumagai A."/>
            <person name="Itakura S."/>
            <person name="Fukuzumi Y."/>
            <person name="Fujimori Y."/>
            <person name="Komiyama M."/>
            <person name="Tashiro H."/>
            <person name="Tanigami A."/>
            <person name="Fujiwara T."/>
            <person name="Ono T."/>
            <person name="Yamada K."/>
            <person name="Fujii Y."/>
            <person name="Ozaki K."/>
            <person name="Hirao M."/>
            <person name="Ohmori Y."/>
            <person name="Kawabata A."/>
            <person name="Hikiji T."/>
            <person name="Kobatake N."/>
            <person name="Inagaki H."/>
            <person name="Ikema Y."/>
            <person name="Okamoto S."/>
            <person name="Okitani R."/>
            <person name="Kawakami T."/>
            <person name="Noguchi S."/>
            <person name="Itoh T."/>
            <person name="Shigeta K."/>
            <person name="Senba T."/>
            <person name="Matsumura K."/>
            <person name="Nakajima Y."/>
            <person name="Mizuno T."/>
            <person name="Morinaga M."/>
            <person name="Sasaki M."/>
            <person name="Togashi T."/>
            <person name="Oyama M."/>
            <person name="Hata H."/>
            <person name="Watanabe M."/>
            <person name="Komatsu T."/>
            <person name="Mizushima-Sugano J."/>
            <person name="Satoh T."/>
            <person name="Shirai Y."/>
            <person name="Takahashi Y."/>
            <person name="Nakagawa K."/>
            <person name="Okumura K."/>
            <person name="Nagase T."/>
            <person name="Nomura N."/>
            <person name="Kikuchi H."/>
            <person name="Masuho Y."/>
            <person name="Yamashita R."/>
            <person name="Nakai K."/>
            <person name="Yada T."/>
            <person name="Nakamura Y."/>
            <person name="Ohara O."/>
            <person name="Isogai T."/>
            <person name="Sugano S."/>
        </authorList>
    </citation>
    <scope>NUCLEOTIDE SEQUENCE [LARGE SCALE MRNA] (ISOFORM 1)</scope>
    <source>
        <tissue>Heart</tissue>
    </source>
</reference>
<reference key="3">
    <citation type="submission" date="2003-02" db="EMBL/GenBank/DDBJ databases">
        <title>Full-length cDNA libraries and normalization.</title>
        <authorList>
            <person name="Li W.B."/>
            <person name="Gruber C."/>
            <person name="Jessee J."/>
            <person name="Polayes D."/>
        </authorList>
    </citation>
    <scope>NUCLEOTIDE SEQUENCE [LARGE SCALE MRNA] (ISOFORM 1)</scope>
    <source>
        <tissue>Placenta</tissue>
    </source>
</reference>
<reference key="4">
    <citation type="journal article" date="2004" name="Genome Res.">
        <title>The status, quality, and expansion of the NIH full-length cDNA project: the Mammalian Gene Collection (MGC).</title>
        <authorList>
            <consortium name="The MGC Project Team"/>
        </authorList>
    </citation>
    <scope>NUCLEOTIDE SEQUENCE [LARGE SCALE MRNA] (ISOFORMS 1 AND 2)</scope>
    <source>
        <tissue>Testis</tissue>
    </source>
</reference>
<reference key="5">
    <citation type="journal article" date="2014" name="J. Proteomics">
        <title>An enzyme assisted RP-RPLC approach for in-depth analysis of human liver phosphoproteome.</title>
        <authorList>
            <person name="Bian Y."/>
            <person name="Song C."/>
            <person name="Cheng K."/>
            <person name="Dong M."/>
            <person name="Wang F."/>
            <person name="Huang J."/>
            <person name="Sun D."/>
            <person name="Wang L."/>
            <person name="Ye M."/>
            <person name="Zou H."/>
        </authorList>
    </citation>
    <scope>IDENTIFICATION BY MASS SPECTROMETRY [LARGE SCALE ANALYSIS]</scope>
    <source>
        <tissue>Liver</tissue>
    </source>
</reference>
<reference key="6">
    <citation type="journal article" date="2016" name="Ann. Neurol.">
        <title>ADSSL1 mutation relevant to autosomal recessive adolescent onset distal myopathy.</title>
        <authorList>
            <person name="Park H.J."/>
            <person name="Hong Y.B."/>
            <person name="Choi Y.C."/>
            <person name="Lee J."/>
            <person name="Kim E.J."/>
            <person name="Lee J.S."/>
            <person name="Mo W.M."/>
            <person name="Ki S.M."/>
            <person name="Kim H.I."/>
            <person name="Kim H.J."/>
            <person name="Hyun Y.S."/>
            <person name="Hong H.D."/>
            <person name="Nam K."/>
            <person name="Jung S.C."/>
            <person name="Kim S.B."/>
            <person name="Kim S.H."/>
            <person name="Kim D.H."/>
            <person name="Oh K.W."/>
            <person name="Kim S.H."/>
            <person name="Yoo J.H."/>
            <person name="Lee J.E."/>
            <person name="Chung K.W."/>
            <person name="Choi B.O."/>
        </authorList>
    </citation>
    <scope>FUNCTION</scope>
    <scope>CATALYTIC ACTIVITY</scope>
    <scope>PATHWAY</scope>
    <scope>INVOLVEMENT IN MPD5</scope>
    <scope>VARIANT MPD5 ASN-261</scope>
    <scope>CHARACTERIZATION OF VARIANT MPD5 ASN-261</scope>
</reference>
<name>PURA1_HUMAN</name>
<feature type="chain" id="PRO_0000095132" description="Adenylosuccinate synthetase isozyme 1">
    <location>
        <begin position="1"/>
        <end position="457"/>
    </location>
</feature>
<feature type="region of interest" description="Disordered" evidence="2">
    <location>
        <begin position="1"/>
        <end position="21"/>
    </location>
</feature>
<feature type="active site" description="Proton acceptor" evidence="1">
    <location>
        <position position="43"/>
    </location>
</feature>
<feature type="active site" description="Proton donor" evidence="1">
    <location>
        <position position="71"/>
    </location>
</feature>
<feature type="binding site" evidence="1">
    <location>
        <begin position="42"/>
        <end position="48"/>
    </location>
    <ligand>
        <name>GTP</name>
        <dbReference type="ChEBI" id="CHEBI:37565"/>
    </ligand>
</feature>
<feature type="binding site" description="in other chain" evidence="1">
    <location>
        <begin position="43"/>
        <end position="46"/>
    </location>
    <ligand>
        <name>IMP</name>
        <dbReference type="ChEBI" id="CHEBI:58053"/>
        <note>ligand shared between dimeric partners</note>
    </ligand>
</feature>
<feature type="binding site" evidence="1">
    <location>
        <position position="43"/>
    </location>
    <ligand>
        <name>Mg(2+)</name>
        <dbReference type="ChEBI" id="CHEBI:18420"/>
    </ligand>
</feature>
<feature type="binding site" evidence="1">
    <location>
        <position position="43"/>
    </location>
    <ligand>
        <name>substrate</name>
    </ligand>
</feature>
<feature type="binding site" description="in other chain" evidence="1">
    <location>
        <begin position="68"/>
        <end position="71"/>
    </location>
    <ligand>
        <name>IMP</name>
        <dbReference type="ChEBI" id="CHEBI:58053"/>
        <note>ligand shared between dimeric partners</note>
    </ligand>
</feature>
<feature type="binding site" evidence="1">
    <location>
        <begin position="70"/>
        <end position="72"/>
    </location>
    <ligand>
        <name>GTP</name>
        <dbReference type="ChEBI" id="CHEBI:37565"/>
    </ligand>
</feature>
<feature type="binding site" evidence="1">
    <location>
        <position position="70"/>
    </location>
    <ligand>
        <name>Mg(2+)</name>
        <dbReference type="ChEBI" id="CHEBI:18420"/>
    </ligand>
</feature>
<feature type="binding site" description="in other chain" evidence="1">
    <location>
        <position position="163"/>
    </location>
    <ligand>
        <name>IMP</name>
        <dbReference type="ChEBI" id="CHEBI:58053"/>
        <note>ligand shared between dimeric partners</note>
    </ligand>
</feature>
<feature type="binding site" evidence="1">
    <location>
        <position position="177"/>
    </location>
    <ligand>
        <name>IMP</name>
        <dbReference type="ChEBI" id="CHEBI:58053"/>
        <note>ligand shared between dimeric partners</note>
    </ligand>
</feature>
<feature type="binding site" description="in other chain" evidence="1">
    <location>
        <position position="256"/>
    </location>
    <ligand>
        <name>IMP</name>
        <dbReference type="ChEBI" id="CHEBI:58053"/>
        <note>ligand shared between dimeric partners</note>
    </ligand>
</feature>
<feature type="binding site" description="in other chain" evidence="1">
    <location>
        <position position="271"/>
    </location>
    <ligand>
        <name>IMP</name>
        <dbReference type="ChEBI" id="CHEBI:58053"/>
        <note>ligand shared between dimeric partners</note>
    </ligand>
</feature>
<feature type="binding site" evidence="1">
    <location>
        <begin position="331"/>
        <end position="337"/>
    </location>
    <ligand>
        <name>substrate</name>
    </ligand>
</feature>
<feature type="binding site" description="in other chain" evidence="1">
    <location>
        <position position="335"/>
    </location>
    <ligand>
        <name>IMP</name>
        <dbReference type="ChEBI" id="CHEBI:58053"/>
        <note>ligand shared between dimeric partners</note>
    </ligand>
</feature>
<feature type="binding site" evidence="1">
    <location>
        <position position="337"/>
    </location>
    <ligand>
        <name>GTP</name>
        <dbReference type="ChEBI" id="CHEBI:37565"/>
    </ligand>
</feature>
<feature type="binding site" evidence="1">
    <location>
        <begin position="363"/>
        <end position="365"/>
    </location>
    <ligand>
        <name>GTP</name>
        <dbReference type="ChEBI" id="CHEBI:37565"/>
    </ligand>
</feature>
<feature type="binding site" evidence="1">
    <location>
        <begin position="445"/>
        <end position="448"/>
    </location>
    <ligand>
        <name>GTP</name>
        <dbReference type="ChEBI" id="CHEBI:37565"/>
    </ligand>
</feature>
<feature type="splice variant" id="VSP_008421" description="In isoform 2." evidence="5">
    <original>MSGTRASNDRPPGAGGVKRGRLQQEAAATGSRVTVVLGAQWGDEGKGKVVDLLATDADIISRCQ</original>
    <variation>MVGRSCGVATQRQGGGQRPTNLALTLSSSPAHSTALPWLPPRSLQLLSGHSVPAQPTPHLPSACGGPTRVTLGEERAWRSHGSNAGGHTCLPRRTAGAGSLTPGGER</variation>
    <location>
        <begin position="1"/>
        <end position="64"/>
    </location>
</feature>
<feature type="sequence variant" id="VAR_076998" description="In MPD5; decreased protein abundance; decreased stability; decreased adenylosuccinate synthase activity; dbSNP:rs140614802." evidence="4">
    <original>D</original>
    <variation>N</variation>
    <location>
        <position position="261"/>
    </location>
</feature>
<proteinExistence type="evidence at protein level"/>
<keyword id="KW-0025">Alternative splicing</keyword>
<keyword id="KW-0963">Cytoplasm</keyword>
<keyword id="KW-0225">Disease variant</keyword>
<keyword id="KW-0342">GTP-binding</keyword>
<keyword id="KW-0436">Ligase</keyword>
<keyword id="KW-0460">Magnesium</keyword>
<keyword id="KW-0479">Metal-binding</keyword>
<keyword id="KW-0547">Nucleotide-binding</keyword>
<keyword id="KW-1267">Proteomics identification</keyword>
<keyword id="KW-0658">Purine biosynthesis</keyword>
<keyword id="KW-1185">Reference proteome</keyword>
<evidence type="ECO:0000255" key="1">
    <source>
        <dbReference type="HAMAP-Rule" id="MF_03126"/>
    </source>
</evidence>
<evidence type="ECO:0000256" key="2">
    <source>
        <dbReference type="SAM" id="MobiDB-lite"/>
    </source>
</evidence>
<evidence type="ECO:0000269" key="3">
    <source>
    </source>
</evidence>
<evidence type="ECO:0000269" key="4">
    <source>
    </source>
</evidence>
<evidence type="ECO:0000303" key="5">
    <source>
    </source>
</evidence>
<evidence type="ECO:0000303" key="6">
    <source>
    </source>
</evidence>
<evidence type="ECO:0000305" key="7"/>
<evidence type="ECO:0000312" key="8">
    <source>
        <dbReference type="HGNC" id="HGNC:20093"/>
    </source>
</evidence>
<sequence length="457" mass="50208">MSGTRASNDRPPGAGGVKRGRLQQEAAATGSRVTVVLGAQWGDEGKGKVVDLLATDADIISRCQGGNNAGHTVVVDGKEYDFHLLPSGIINTKAVSFIGNGVVIHLPGLFEEAEKNEKKGLKDWEKRLIISDRAHLVFDFHQAVDGLQEVQRQAQEGKNIGTTKKGIGPTYSSKAARTGLRICDLLSDFDEFSSRFKNLAHQHQSMFPTLEIDIEGQLKRLKGFAERIRPMVRDGVYFMYEALHGPPKKILVEGANAALLDIDFGTYPFVTSSNCTVGGVCTGLGIPPQNIGDVYGVVKAYTTRVGIGAFPTEQINEIGGLLQTRGHEWGVTTGRKRRCGWLDLMILRYAHMVNGFTALALTKLDILDVLGEVKVGVSYKLNGKRIPYFPANQEMLQKVEVEYETLPGWKADTTGARRWEDLPPQAQNYIRFVENHVGVAVKWVGVGKSRESMIQLF</sequence>
<protein>
    <recommendedName>
        <fullName evidence="1">Adenylosuccinate synthetase isozyme 1</fullName>
        <shortName evidence="1">AMPSase 1</shortName>
        <shortName evidence="1">AdSS 1</shortName>
        <ecNumber evidence="1 4">6.3.4.4</ecNumber>
    </recommendedName>
    <alternativeName>
        <fullName evidence="1">Adenylosuccinate synthetase, basic isozyme</fullName>
    </alternativeName>
    <alternativeName>
        <fullName evidence="1">Adenylosuccinate synthetase, muscle isozyme</fullName>
        <shortName evidence="1">M-type adenylosuccinate synthetase</shortName>
    </alternativeName>
    <alternativeName>
        <fullName evidence="6">Adenylosuccinate synthetase-like 1</fullName>
        <shortName evidence="6">AdSSL1</shortName>
    </alternativeName>
    <alternativeName>
        <fullName evidence="1">IMP--aspartate ligase 1</fullName>
    </alternativeName>
</protein>
<accession>Q8N142</accession>
<accession>Q86TT6</accession>
<accession>Q8N714</accession>
<organism>
    <name type="scientific">Homo sapiens</name>
    <name type="common">Human</name>
    <dbReference type="NCBI Taxonomy" id="9606"/>
    <lineage>
        <taxon>Eukaryota</taxon>
        <taxon>Metazoa</taxon>
        <taxon>Chordata</taxon>
        <taxon>Craniata</taxon>
        <taxon>Vertebrata</taxon>
        <taxon>Euteleostomi</taxon>
        <taxon>Mammalia</taxon>
        <taxon>Eutheria</taxon>
        <taxon>Euarchontoglires</taxon>
        <taxon>Primates</taxon>
        <taxon>Haplorrhini</taxon>
        <taxon>Catarrhini</taxon>
        <taxon>Hominidae</taxon>
        <taxon>Homo</taxon>
    </lineage>
</organism>
<gene>
    <name evidence="8" type="primary">ADSS1</name>
    <name evidence="1" type="synonym">ADSSL1</name>
</gene>
<dbReference type="EC" id="6.3.4.4" evidence="1 4"/>
<dbReference type="EMBL" id="AY037159">
    <property type="protein sequence ID" value="AAK67646.1"/>
    <property type="molecule type" value="mRNA"/>
</dbReference>
<dbReference type="EMBL" id="AK095921">
    <property type="protein sequence ID" value="BAC04649.1"/>
    <property type="molecule type" value="mRNA"/>
</dbReference>
<dbReference type="EMBL" id="BX248286">
    <property type="protein sequence ID" value="CAD62614.1"/>
    <property type="status" value="ALT_INIT"/>
    <property type="molecule type" value="mRNA"/>
</dbReference>
<dbReference type="EMBL" id="BC032039">
    <property type="protein sequence ID" value="AAH32039.1"/>
    <property type="status" value="ALT_FRAME"/>
    <property type="molecule type" value="mRNA"/>
</dbReference>
<dbReference type="EMBL" id="BC047904">
    <property type="protein sequence ID" value="AAH47904.1"/>
    <property type="molecule type" value="mRNA"/>
</dbReference>
<dbReference type="CCDS" id="CCDS9990.1">
    <molecule id="Q8N142-1"/>
</dbReference>
<dbReference type="CCDS" id="CCDS9991.1">
    <molecule id="Q8N142-2"/>
</dbReference>
<dbReference type="RefSeq" id="NP_001307353.1">
    <property type="nucleotide sequence ID" value="NM_001320424.1"/>
</dbReference>
<dbReference type="RefSeq" id="NP_689541.1">
    <molecule id="Q8N142-1"/>
    <property type="nucleotide sequence ID" value="NM_152328.5"/>
</dbReference>
<dbReference type="RefSeq" id="NP_954634.1">
    <molecule id="Q8N142-2"/>
    <property type="nucleotide sequence ID" value="NM_199165.2"/>
</dbReference>
<dbReference type="SMR" id="Q8N142"/>
<dbReference type="BioGRID" id="125783">
    <property type="interactions" value="12"/>
</dbReference>
<dbReference type="FunCoup" id="Q8N142">
    <property type="interactions" value="911"/>
</dbReference>
<dbReference type="IntAct" id="Q8N142">
    <property type="interactions" value="8"/>
</dbReference>
<dbReference type="MINT" id="Q8N142"/>
<dbReference type="STRING" id="9606.ENSP00000333019"/>
<dbReference type="DrugBank" id="DB03510">
    <property type="generic name" value="6-O-Phosphoryl Inosine Monophosphate"/>
</dbReference>
<dbReference type="DrugBank" id="DB00787">
    <property type="generic name" value="Acyclovir"/>
</dbReference>
<dbReference type="DrugBank" id="DB04418">
    <property type="generic name" value="Adenylosuccinic acid"/>
</dbReference>
<dbReference type="DrugBank" id="DB05540">
    <property type="generic name" value="Alanosine"/>
</dbReference>
<dbReference type="DrugBank" id="DB00128">
    <property type="generic name" value="Aspartic acid"/>
</dbReference>
<dbReference type="DrugBank" id="DB04315">
    <property type="generic name" value="Guanosine-5'-Diphosphate"/>
</dbReference>
<dbReference type="DrugBank" id="DB04137">
    <property type="generic name" value="Guanosine-5'-Triphosphate"/>
</dbReference>
<dbReference type="DrugBank" id="DB02109">
    <property type="generic name" value="Hadacidin"/>
</dbReference>
<dbReference type="DrugBank" id="DB04566">
    <property type="generic name" value="Inosinic Acid"/>
</dbReference>
<dbReference type="GlyGen" id="Q8N142">
    <property type="glycosylation" value="1 site"/>
</dbReference>
<dbReference type="iPTMnet" id="Q8N142"/>
<dbReference type="PhosphoSitePlus" id="Q8N142"/>
<dbReference type="SwissPalm" id="Q8N142"/>
<dbReference type="BioMuta" id="ADSSL1"/>
<dbReference type="DMDM" id="37537958"/>
<dbReference type="jPOST" id="Q8N142"/>
<dbReference type="MassIVE" id="Q8N142"/>
<dbReference type="PaxDb" id="9606-ENSP00000333019"/>
<dbReference type="PeptideAtlas" id="Q8N142"/>
<dbReference type="ProteomicsDB" id="71550">
    <molecule id="Q8N142-1"/>
</dbReference>
<dbReference type="ProteomicsDB" id="71551">
    <molecule id="Q8N142-2"/>
</dbReference>
<dbReference type="Pumba" id="Q8N142"/>
<dbReference type="Antibodypedia" id="28209">
    <property type="antibodies" value="101 antibodies from 18 providers"/>
</dbReference>
<dbReference type="DNASU" id="122622"/>
<dbReference type="Ensembl" id="ENST00000330877.7">
    <molecule id="Q8N142-1"/>
    <property type="protein sequence ID" value="ENSP00000331260.2"/>
    <property type="gene ID" value="ENSG00000185100.12"/>
</dbReference>
<dbReference type="Ensembl" id="ENST00000332972.9">
    <molecule id="Q8N142-2"/>
    <property type="protein sequence ID" value="ENSP00000333019.5"/>
    <property type="gene ID" value="ENSG00000185100.12"/>
</dbReference>
<dbReference type="Ensembl" id="ENST00000710323.1">
    <molecule id="Q8N142-1"/>
    <property type="protein sequence ID" value="ENSP00000518203.1"/>
    <property type="gene ID" value="ENSG00000185100.12"/>
</dbReference>
<dbReference type="GeneID" id="122622"/>
<dbReference type="KEGG" id="hsa:122622"/>
<dbReference type="MANE-Select" id="ENST00000330877.7">
    <property type="protein sequence ID" value="ENSP00000331260.2"/>
    <property type="RefSeq nucleotide sequence ID" value="NM_152328.5"/>
    <property type="RefSeq protein sequence ID" value="NP_689541.1"/>
</dbReference>
<dbReference type="UCSC" id="uc001ypd.5">
    <molecule id="Q8N142-1"/>
    <property type="organism name" value="human"/>
</dbReference>
<dbReference type="AGR" id="HGNC:20093"/>
<dbReference type="CTD" id="122622"/>
<dbReference type="DisGeNET" id="122622"/>
<dbReference type="GeneCards" id="ADSS1"/>
<dbReference type="HGNC" id="HGNC:20093">
    <property type="gene designation" value="ADSS1"/>
</dbReference>
<dbReference type="HPA" id="ENSG00000185100">
    <property type="expression patterns" value="Group enriched (skeletal muscle, tongue)"/>
</dbReference>
<dbReference type="MalaCards" id="ADSS1"/>
<dbReference type="MIM" id="612498">
    <property type="type" value="gene"/>
</dbReference>
<dbReference type="MIM" id="617030">
    <property type="type" value="phenotype"/>
</dbReference>
<dbReference type="neXtProt" id="NX_Q8N142"/>
<dbReference type="OpenTargets" id="ENSG00000185100"/>
<dbReference type="Orphanet" id="482601">
    <property type="disease" value="Adenylosuccinate synthetase-like 1-related distal myopathy"/>
</dbReference>
<dbReference type="PharmGKB" id="PA134974111"/>
<dbReference type="VEuPathDB" id="HostDB:ENSG00000185100"/>
<dbReference type="eggNOG" id="KOG1355">
    <property type="taxonomic scope" value="Eukaryota"/>
</dbReference>
<dbReference type="GeneTree" id="ENSGT00390000015553"/>
<dbReference type="HOGENOM" id="CLU_029848_0_0_1"/>
<dbReference type="InParanoid" id="Q8N142"/>
<dbReference type="OMA" id="TKAYSSC"/>
<dbReference type="OrthoDB" id="10265645at2759"/>
<dbReference type="PAN-GO" id="Q8N142">
    <property type="GO annotations" value="4 GO annotations based on evolutionary models"/>
</dbReference>
<dbReference type="PhylomeDB" id="Q8N142"/>
<dbReference type="TreeFam" id="TF300486"/>
<dbReference type="BRENDA" id="6.3.4.4">
    <property type="organism ID" value="2681"/>
</dbReference>
<dbReference type="PathwayCommons" id="Q8N142"/>
<dbReference type="Reactome" id="R-HSA-73817">
    <property type="pathway name" value="Purine ribonucleoside monophosphate biosynthesis"/>
</dbReference>
<dbReference type="SignaLink" id="Q8N142"/>
<dbReference type="SIGNOR" id="Q8N142"/>
<dbReference type="UniPathway" id="UPA00075">
    <property type="reaction ID" value="UER00335"/>
</dbReference>
<dbReference type="BioGRID-ORCS" id="122622">
    <property type="hits" value="9 hits in 1153 CRISPR screens"/>
</dbReference>
<dbReference type="ChiTaRS" id="ADSSL1">
    <property type="organism name" value="human"/>
</dbReference>
<dbReference type="GenomeRNAi" id="122622"/>
<dbReference type="Pharos" id="Q8N142">
    <property type="development level" value="Tbio"/>
</dbReference>
<dbReference type="PRO" id="PR:Q8N142"/>
<dbReference type="Proteomes" id="UP000005640">
    <property type="component" value="Chromosome 14"/>
</dbReference>
<dbReference type="RNAct" id="Q8N142">
    <property type="molecule type" value="protein"/>
</dbReference>
<dbReference type="Bgee" id="ENSG00000185100">
    <property type="expression patterns" value="Expressed in vastus lateralis and 170 other cell types or tissues"/>
</dbReference>
<dbReference type="ExpressionAtlas" id="Q8N142">
    <property type="expression patterns" value="baseline and differential"/>
</dbReference>
<dbReference type="GO" id="GO:0005737">
    <property type="term" value="C:cytoplasm"/>
    <property type="evidence" value="ECO:0000314"/>
    <property type="project" value="UniProtKB"/>
</dbReference>
<dbReference type="GO" id="GO:0005829">
    <property type="term" value="C:cytosol"/>
    <property type="evidence" value="ECO:0000304"/>
    <property type="project" value="Reactome"/>
</dbReference>
<dbReference type="GO" id="GO:0051015">
    <property type="term" value="F:actin filament binding"/>
    <property type="evidence" value="ECO:0007669"/>
    <property type="project" value="Ensembl"/>
</dbReference>
<dbReference type="GO" id="GO:0004019">
    <property type="term" value="F:adenylosuccinate synthase activity"/>
    <property type="evidence" value="ECO:0000314"/>
    <property type="project" value="UniProtKB"/>
</dbReference>
<dbReference type="GO" id="GO:0005525">
    <property type="term" value="F:GTP binding"/>
    <property type="evidence" value="ECO:0000303"/>
    <property type="project" value="UniProtKB"/>
</dbReference>
<dbReference type="GO" id="GO:0003924">
    <property type="term" value="F:GTPase activity"/>
    <property type="evidence" value="ECO:0007669"/>
    <property type="project" value="Ensembl"/>
</dbReference>
<dbReference type="GO" id="GO:0042802">
    <property type="term" value="F:identical protein binding"/>
    <property type="evidence" value="ECO:0007669"/>
    <property type="project" value="Ensembl"/>
</dbReference>
<dbReference type="GO" id="GO:0000287">
    <property type="term" value="F:magnesium ion binding"/>
    <property type="evidence" value="ECO:0007669"/>
    <property type="project" value="UniProtKB-UniRule"/>
</dbReference>
<dbReference type="GO" id="GO:0042301">
    <property type="term" value="F:phosphate ion binding"/>
    <property type="evidence" value="ECO:0000303"/>
    <property type="project" value="UniProtKB"/>
</dbReference>
<dbReference type="GO" id="GO:0044208">
    <property type="term" value="P:'de novo' AMP biosynthetic process"/>
    <property type="evidence" value="ECO:0000318"/>
    <property type="project" value="GO_Central"/>
</dbReference>
<dbReference type="GO" id="GO:0006167">
    <property type="term" value="P:AMP biosynthetic process"/>
    <property type="evidence" value="ECO:0000314"/>
    <property type="project" value="UniProtKB"/>
</dbReference>
<dbReference type="GO" id="GO:0044209">
    <property type="term" value="P:AMP salvage"/>
    <property type="evidence" value="ECO:0007669"/>
    <property type="project" value="Ensembl"/>
</dbReference>
<dbReference type="GO" id="GO:0006531">
    <property type="term" value="P:aspartate metabolic process"/>
    <property type="evidence" value="ECO:0007669"/>
    <property type="project" value="Ensembl"/>
</dbReference>
<dbReference type="GO" id="GO:0071257">
    <property type="term" value="P:cellular response to electrical stimulus"/>
    <property type="evidence" value="ECO:0007669"/>
    <property type="project" value="Ensembl"/>
</dbReference>
<dbReference type="GO" id="GO:0071466">
    <property type="term" value="P:cellular response to xenobiotic stimulus"/>
    <property type="evidence" value="ECO:0007669"/>
    <property type="project" value="Ensembl"/>
</dbReference>
<dbReference type="GO" id="GO:0006541">
    <property type="term" value="P:glutamine metabolic process"/>
    <property type="evidence" value="ECO:0007669"/>
    <property type="project" value="Ensembl"/>
</dbReference>
<dbReference type="GO" id="GO:0002376">
    <property type="term" value="P:immune system process"/>
    <property type="evidence" value="ECO:0000303"/>
    <property type="project" value="UniProtKB"/>
</dbReference>
<dbReference type="GO" id="GO:0046040">
    <property type="term" value="P:IMP metabolic process"/>
    <property type="evidence" value="ECO:0000318"/>
    <property type="project" value="GO_Central"/>
</dbReference>
<dbReference type="GO" id="GO:0014850">
    <property type="term" value="P:response to muscle activity"/>
    <property type="evidence" value="ECO:0007669"/>
    <property type="project" value="Ensembl"/>
</dbReference>
<dbReference type="GO" id="GO:0042594">
    <property type="term" value="P:response to starvation"/>
    <property type="evidence" value="ECO:0007669"/>
    <property type="project" value="Ensembl"/>
</dbReference>
<dbReference type="CDD" id="cd03108">
    <property type="entry name" value="AdSS"/>
    <property type="match status" value="1"/>
</dbReference>
<dbReference type="FunFam" id="3.90.170.10:FF:000001">
    <property type="entry name" value="Adenylosuccinate synthetase"/>
    <property type="match status" value="1"/>
</dbReference>
<dbReference type="FunFam" id="1.10.300.10:FF:000002">
    <property type="entry name" value="Adenylosuccinate synthetase, chloroplastic"/>
    <property type="match status" value="1"/>
</dbReference>
<dbReference type="Gene3D" id="3.40.440.10">
    <property type="entry name" value="Adenylosuccinate Synthetase, subunit A, domain 1"/>
    <property type="match status" value="1"/>
</dbReference>
<dbReference type="Gene3D" id="1.10.300.10">
    <property type="entry name" value="Adenylosuccinate Synthetase, subunit A, domain 2"/>
    <property type="match status" value="1"/>
</dbReference>
<dbReference type="Gene3D" id="3.90.170.10">
    <property type="entry name" value="Adenylosuccinate Synthetase, subunit A, domain 3"/>
    <property type="match status" value="1"/>
</dbReference>
<dbReference type="HAMAP" id="MF_00011">
    <property type="entry name" value="Adenylosucc_synth"/>
    <property type="match status" value="1"/>
</dbReference>
<dbReference type="HAMAP" id="MF_03126">
    <property type="entry name" value="Adenylosucc_synth_vert_basic"/>
    <property type="match status" value="1"/>
</dbReference>
<dbReference type="InterPro" id="IPR018220">
    <property type="entry name" value="Adenylosuccin_syn_GTP-bd"/>
</dbReference>
<dbReference type="InterPro" id="IPR033128">
    <property type="entry name" value="Adenylosuccin_syn_Lys_AS"/>
</dbReference>
<dbReference type="InterPro" id="IPR042109">
    <property type="entry name" value="Adenylosuccinate_synth_dom1"/>
</dbReference>
<dbReference type="InterPro" id="IPR042110">
    <property type="entry name" value="Adenylosuccinate_synth_dom2"/>
</dbReference>
<dbReference type="InterPro" id="IPR042111">
    <property type="entry name" value="Adenylosuccinate_synth_dom3"/>
</dbReference>
<dbReference type="InterPro" id="IPR001114">
    <property type="entry name" value="Adenylosuccinate_synthetase"/>
</dbReference>
<dbReference type="InterPro" id="IPR027509">
    <property type="entry name" value="AdSS_1_vert"/>
</dbReference>
<dbReference type="InterPro" id="IPR027417">
    <property type="entry name" value="P-loop_NTPase"/>
</dbReference>
<dbReference type="NCBIfam" id="NF002223">
    <property type="entry name" value="PRK01117.1"/>
    <property type="match status" value="1"/>
</dbReference>
<dbReference type="NCBIfam" id="TIGR00184">
    <property type="entry name" value="purA"/>
    <property type="match status" value="1"/>
</dbReference>
<dbReference type="PANTHER" id="PTHR11846">
    <property type="entry name" value="ADENYLOSUCCINATE SYNTHETASE"/>
    <property type="match status" value="1"/>
</dbReference>
<dbReference type="PANTHER" id="PTHR11846:SF2">
    <property type="entry name" value="ADENYLOSUCCINATE SYNTHETASE ISOZYME 1"/>
    <property type="match status" value="1"/>
</dbReference>
<dbReference type="Pfam" id="PF00709">
    <property type="entry name" value="Adenylsucc_synt"/>
    <property type="match status" value="1"/>
</dbReference>
<dbReference type="SMART" id="SM00788">
    <property type="entry name" value="Adenylsucc_synt"/>
    <property type="match status" value="1"/>
</dbReference>
<dbReference type="SUPFAM" id="SSF52540">
    <property type="entry name" value="P-loop containing nucleoside triphosphate hydrolases"/>
    <property type="match status" value="1"/>
</dbReference>
<dbReference type="PROSITE" id="PS01266">
    <property type="entry name" value="ADENYLOSUCCIN_SYN_1"/>
    <property type="match status" value="1"/>
</dbReference>
<dbReference type="PROSITE" id="PS00513">
    <property type="entry name" value="ADENYLOSUCCIN_SYN_2"/>
    <property type="match status" value="1"/>
</dbReference>
<comment type="function">
    <text evidence="4">Component of the purine nucleotide cycle (PNC), which interconverts IMP and AMP to regulate the nucleotide levels in various tissues, and which contributes to glycolysis and ammoniagenesis. Catalyzes the first committed step in the biosynthesis of AMP from IMP.</text>
</comment>
<comment type="catalytic activity">
    <reaction evidence="1 4">
        <text>IMP + L-aspartate + GTP = N(6)-(1,2-dicarboxyethyl)-AMP + GDP + phosphate + 2 H(+)</text>
        <dbReference type="Rhea" id="RHEA:15753"/>
        <dbReference type="ChEBI" id="CHEBI:15378"/>
        <dbReference type="ChEBI" id="CHEBI:29991"/>
        <dbReference type="ChEBI" id="CHEBI:37565"/>
        <dbReference type="ChEBI" id="CHEBI:43474"/>
        <dbReference type="ChEBI" id="CHEBI:57567"/>
        <dbReference type="ChEBI" id="CHEBI:58053"/>
        <dbReference type="ChEBI" id="CHEBI:58189"/>
        <dbReference type="EC" id="6.3.4.4"/>
    </reaction>
</comment>
<comment type="cofactor">
    <cofactor evidence="1">
        <name>Mg(2+)</name>
        <dbReference type="ChEBI" id="CHEBI:18420"/>
    </cofactor>
    <text evidence="1">Binds 1 Mg(2+) ion per subunit.</text>
</comment>
<comment type="pathway">
    <text evidence="1 4">Purine metabolism; AMP biosynthesis via de novo pathway; AMP from IMP: step 1/2.</text>
</comment>
<comment type="subunit">
    <text evidence="1">Homodimer.</text>
</comment>
<comment type="interaction">
    <interactant intactId="EBI-3925250">
        <id>Q8N142</id>
    </interactant>
    <interactant intactId="EBI-1042898">
        <id>P30520</id>
        <label>ADSS2</label>
    </interactant>
    <organismsDiffer>false</organismsDiffer>
    <experiments>3</experiments>
</comment>
<comment type="subcellular location">
    <subcellularLocation>
        <location evidence="1 3">Cytoplasm</location>
    </subcellularLocation>
</comment>
<comment type="alternative products">
    <event type="alternative splicing"/>
    <isoform>
        <id>Q8N142-1</id>
        <name>1</name>
        <sequence type="displayed"/>
    </isoform>
    <isoform>
        <id>Q8N142-2</id>
        <name>2</name>
        <sequence type="described" ref="VSP_008421"/>
    </isoform>
</comment>
<comment type="tissue specificity">
    <text evidence="3">Predominantly expressed in skeletal muscle and heart, as well as in several hematopoietic cell lines and solid tumors.</text>
</comment>
<comment type="disease" evidence="4">
    <disease id="DI-04761">
        <name>Myopathy, distal, 5</name>
        <acronym>MPD5</acronym>
        <description>A form of distal myopathy, a group of muscular disorders characterized by progressive muscular weakness and muscle atrophy beginning in the hands, the legs or the feet. MPD5 is an autosomal recessive form, predominantly affecting the lower limbs.</description>
        <dbReference type="MIM" id="617030"/>
    </disease>
    <text>The disease is caused by variants affecting the gene represented in this entry.</text>
</comment>
<comment type="similarity">
    <text evidence="1">Belongs to the adenylosuccinate synthetase family.</text>
</comment>
<comment type="sequence caution" evidence="7">
    <conflict type="frameshift">
        <sequence resource="EMBL-CDS" id="AAH32039"/>
    </conflict>
</comment>
<comment type="sequence caution" evidence="7">
    <conflict type="erroneous initiation">
        <sequence resource="EMBL-CDS" id="CAD62614"/>
    </conflict>
</comment>